<gene>
    <name evidence="1" type="primary">pyrB</name>
    <name type="ordered locus">NIS_0376</name>
</gene>
<dbReference type="EC" id="2.1.3.2" evidence="1"/>
<dbReference type="EMBL" id="AP009178">
    <property type="protein sequence ID" value="BAF69490.1"/>
    <property type="molecule type" value="Genomic_DNA"/>
</dbReference>
<dbReference type="RefSeq" id="WP_012081753.1">
    <property type="nucleotide sequence ID" value="NC_009662.1"/>
</dbReference>
<dbReference type="SMR" id="A6Q1Y1"/>
<dbReference type="FunCoup" id="A6Q1Y1">
    <property type="interactions" value="484"/>
</dbReference>
<dbReference type="STRING" id="387092.NIS_0376"/>
<dbReference type="KEGG" id="nis:NIS_0376"/>
<dbReference type="eggNOG" id="COG0540">
    <property type="taxonomic scope" value="Bacteria"/>
</dbReference>
<dbReference type="HOGENOM" id="CLU_043846_2_0_7"/>
<dbReference type="InParanoid" id="A6Q1Y1"/>
<dbReference type="OrthoDB" id="9774690at2"/>
<dbReference type="UniPathway" id="UPA00070">
    <property type="reaction ID" value="UER00116"/>
</dbReference>
<dbReference type="Proteomes" id="UP000001118">
    <property type="component" value="Chromosome"/>
</dbReference>
<dbReference type="GO" id="GO:0005829">
    <property type="term" value="C:cytosol"/>
    <property type="evidence" value="ECO:0007669"/>
    <property type="project" value="TreeGrafter"/>
</dbReference>
<dbReference type="GO" id="GO:0016597">
    <property type="term" value="F:amino acid binding"/>
    <property type="evidence" value="ECO:0007669"/>
    <property type="project" value="InterPro"/>
</dbReference>
<dbReference type="GO" id="GO:0004070">
    <property type="term" value="F:aspartate carbamoyltransferase activity"/>
    <property type="evidence" value="ECO:0007669"/>
    <property type="project" value="UniProtKB-UniRule"/>
</dbReference>
<dbReference type="GO" id="GO:0006207">
    <property type="term" value="P:'de novo' pyrimidine nucleobase biosynthetic process"/>
    <property type="evidence" value="ECO:0007669"/>
    <property type="project" value="InterPro"/>
</dbReference>
<dbReference type="GO" id="GO:0044205">
    <property type="term" value="P:'de novo' UMP biosynthetic process"/>
    <property type="evidence" value="ECO:0007669"/>
    <property type="project" value="UniProtKB-UniRule"/>
</dbReference>
<dbReference type="GO" id="GO:0006520">
    <property type="term" value="P:amino acid metabolic process"/>
    <property type="evidence" value="ECO:0007669"/>
    <property type="project" value="InterPro"/>
</dbReference>
<dbReference type="Gene3D" id="3.40.50.1370">
    <property type="entry name" value="Aspartate/ornithine carbamoyltransferase"/>
    <property type="match status" value="2"/>
</dbReference>
<dbReference type="HAMAP" id="MF_00001">
    <property type="entry name" value="Asp_carb_tr"/>
    <property type="match status" value="1"/>
</dbReference>
<dbReference type="InterPro" id="IPR006132">
    <property type="entry name" value="Asp/Orn_carbamoyltranf_P-bd"/>
</dbReference>
<dbReference type="InterPro" id="IPR006130">
    <property type="entry name" value="Asp/Orn_carbamoylTrfase"/>
</dbReference>
<dbReference type="InterPro" id="IPR036901">
    <property type="entry name" value="Asp/Orn_carbamoylTrfase_sf"/>
</dbReference>
<dbReference type="InterPro" id="IPR002082">
    <property type="entry name" value="Asp_carbamoyltransf"/>
</dbReference>
<dbReference type="InterPro" id="IPR006131">
    <property type="entry name" value="Asp_carbamoyltransf_Asp/Orn-bd"/>
</dbReference>
<dbReference type="NCBIfam" id="TIGR00670">
    <property type="entry name" value="asp_carb_tr"/>
    <property type="match status" value="1"/>
</dbReference>
<dbReference type="NCBIfam" id="NF002032">
    <property type="entry name" value="PRK00856.1"/>
    <property type="match status" value="1"/>
</dbReference>
<dbReference type="PANTHER" id="PTHR45753:SF6">
    <property type="entry name" value="ASPARTATE CARBAMOYLTRANSFERASE"/>
    <property type="match status" value="1"/>
</dbReference>
<dbReference type="PANTHER" id="PTHR45753">
    <property type="entry name" value="ORNITHINE CARBAMOYLTRANSFERASE, MITOCHONDRIAL"/>
    <property type="match status" value="1"/>
</dbReference>
<dbReference type="Pfam" id="PF00185">
    <property type="entry name" value="OTCace"/>
    <property type="match status" value="1"/>
</dbReference>
<dbReference type="Pfam" id="PF02729">
    <property type="entry name" value="OTCace_N"/>
    <property type="match status" value="1"/>
</dbReference>
<dbReference type="PRINTS" id="PR00100">
    <property type="entry name" value="AOTCASE"/>
</dbReference>
<dbReference type="PRINTS" id="PR00101">
    <property type="entry name" value="ATCASE"/>
</dbReference>
<dbReference type="SUPFAM" id="SSF53671">
    <property type="entry name" value="Aspartate/ornithine carbamoyltransferase"/>
    <property type="match status" value="1"/>
</dbReference>
<dbReference type="PROSITE" id="PS00097">
    <property type="entry name" value="CARBAMOYLTRANSFERASE"/>
    <property type="match status" value="1"/>
</dbReference>
<organism>
    <name type="scientific">Nitratiruptor sp. (strain SB155-2)</name>
    <dbReference type="NCBI Taxonomy" id="387092"/>
    <lineage>
        <taxon>Bacteria</taxon>
        <taxon>Pseudomonadati</taxon>
        <taxon>Campylobacterota</taxon>
        <taxon>Epsilonproteobacteria</taxon>
        <taxon>Nautiliales</taxon>
        <taxon>Nitratiruptoraceae</taxon>
        <taxon>Nitratiruptor</taxon>
    </lineage>
</organism>
<name>PYRB_NITSB</name>
<feature type="chain" id="PRO_0000321123" description="Aspartate carbamoyltransferase catalytic subunit">
    <location>
        <begin position="1"/>
        <end position="292"/>
    </location>
</feature>
<feature type="binding site" evidence="1">
    <location>
        <position position="50"/>
    </location>
    <ligand>
        <name>carbamoyl phosphate</name>
        <dbReference type="ChEBI" id="CHEBI:58228"/>
    </ligand>
</feature>
<feature type="binding site" evidence="1">
    <location>
        <position position="51"/>
    </location>
    <ligand>
        <name>carbamoyl phosphate</name>
        <dbReference type="ChEBI" id="CHEBI:58228"/>
    </ligand>
</feature>
<feature type="binding site" evidence="1">
    <location>
        <position position="78"/>
    </location>
    <ligand>
        <name>L-aspartate</name>
        <dbReference type="ChEBI" id="CHEBI:29991"/>
    </ligand>
</feature>
<feature type="binding site" evidence="1">
    <location>
        <position position="100"/>
    </location>
    <ligand>
        <name>carbamoyl phosphate</name>
        <dbReference type="ChEBI" id="CHEBI:58228"/>
    </ligand>
</feature>
<feature type="binding site" evidence="1">
    <location>
        <position position="128"/>
    </location>
    <ligand>
        <name>carbamoyl phosphate</name>
        <dbReference type="ChEBI" id="CHEBI:58228"/>
    </ligand>
</feature>
<feature type="binding site" evidence="1">
    <location>
        <position position="131"/>
    </location>
    <ligand>
        <name>carbamoyl phosphate</name>
        <dbReference type="ChEBI" id="CHEBI:58228"/>
    </ligand>
</feature>
<feature type="binding site" evidence="1">
    <location>
        <position position="161"/>
    </location>
    <ligand>
        <name>L-aspartate</name>
        <dbReference type="ChEBI" id="CHEBI:29991"/>
    </ligand>
</feature>
<feature type="binding site" evidence="1">
    <location>
        <position position="211"/>
    </location>
    <ligand>
        <name>L-aspartate</name>
        <dbReference type="ChEBI" id="CHEBI:29991"/>
    </ligand>
</feature>
<feature type="binding site" evidence="1">
    <location>
        <position position="250"/>
    </location>
    <ligand>
        <name>carbamoyl phosphate</name>
        <dbReference type="ChEBI" id="CHEBI:58228"/>
    </ligand>
</feature>
<feature type="binding site" evidence="1">
    <location>
        <position position="251"/>
    </location>
    <ligand>
        <name>carbamoyl phosphate</name>
        <dbReference type="ChEBI" id="CHEBI:58228"/>
    </ligand>
</feature>
<evidence type="ECO:0000255" key="1">
    <source>
        <dbReference type="HAMAP-Rule" id="MF_00001"/>
    </source>
</evidence>
<keyword id="KW-0665">Pyrimidine biosynthesis</keyword>
<keyword id="KW-1185">Reference proteome</keyword>
<keyword id="KW-0808">Transferase</keyword>
<protein>
    <recommendedName>
        <fullName evidence="1">Aspartate carbamoyltransferase catalytic subunit</fullName>
        <ecNumber evidence="1">2.1.3.2</ecNumber>
    </recommendedName>
    <alternativeName>
        <fullName evidence="1">Aspartate transcarbamylase</fullName>
        <shortName evidence="1">ATCase</shortName>
    </alternativeName>
</protein>
<sequence>MIRHLITTKDFTKDEIEDLFDDAQKFLNEPTPHLLKNKLIITIFFENSTRTRSSFEVAAKRLGAEVVSLDVSKSSTKKGETLFDTAANLNAMEPHAIVVRHKSAGVPYILSKYVSCSLINGGDGAHAHPTQALLDLFTLKQHFKAVEGKKIAIVGDIKNSRVANSNIELLQRFGMKVILVAPPHFLPKTDLPISYDLHAIINEVDAIMSLRTQTERHKYPIYASLRDYGNDFCITKDLIKDKDLIILHPGPVHRNIDISDEVLTDPRCKVLEQVKNGVAVRMAVLKKLIMHG</sequence>
<reference key="1">
    <citation type="journal article" date="2007" name="Proc. Natl. Acad. Sci. U.S.A.">
        <title>Deep-sea vent epsilon-proteobacterial genomes provide insights into emergence of pathogens.</title>
        <authorList>
            <person name="Nakagawa S."/>
            <person name="Takaki Y."/>
            <person name="Shimamura S."/>
            <person name="Reysenbach A.-L."/>
            <person name="Takai K."/>
            <person name="Horikoshi K."/>
        </authorList>
    </citation>
    <scope>NUCLEOTIDE SEQUENCE [LARGE SCALE GENOMIC DNA]</scope>
    <source>
        <strain>SB155-2</strain>
    </source>
</reference>
<proteinExistence type="inferred from homology"/>
<accession>A6Q1Y1</accession>
<comment type="function">
    <text evidence="1">Catalyzes the condensation of carbamoyl phosphate and aspartate to form carbamoyl aspartate and inorganic phosphate, the committed step in the de novo pyrimidine nucleotide biosynthesis pathway.</text>
</comment>
<comment type="catalytic activity">
    <reaction evidence="1">
        <text>carbamoyl phosphate + L-aspartate = N-carbamoyl-L-aspartate + phosphate + H(+)</text>
        <dbReference type="Rhea" id="RHEA:20013"/>
        <dbReference type="ChEBI" id="CHEBI:15378"/>
        <dbReference type="ChEBI" id="CHEBI:29991"/>
        <dbReference type="ChEBI" id="CHEBI:32814"/>
        <dbReference type="ChEBI" id="CHEBI:43474"/>
        <dbReference type="ChEBI" id="CHEBI:58228"/>
        <dbReference type="EC" id="2.1.3.2"/>
    </reaction>
</comment>
<comment type="pathway">
    <text evidence="1">Pyrimidine metabolism; UMP biosynthesis via de novo pathway; (S)-dihydroorotate from bicarbonate: step 2/3.</text>
</comment>
<comment type="subunit">
    <text evidence="1">Heterododecamer (2C3:3R2) of six catalytic PyrB chains organized as two trimers (C3), and six regulatory PyrI chains organized as three dimers (R2).</text>
</comment>
<comment type="similarity">
    <text evidence="1">Belongs to the aspartate/ornithine carbamoyltransferase superfamily. ATCase family.</text>
</comment>